<sequence>MKPPMDLDSLLTQTPAKDNAALERVLAAARGELALRRPVRRWRTQAVGLMAASAGLGLLAAVVLLAVGAVTGPLLLARAPLLAMLVGTSAVCAWGALSPKGRWMRRLGVGLAVVSAAALVLARGAPHSPPSFPGWVCTVSHLAIGVVPLVVALFALRGAFFQPLRAVVAGLSVGSTGALLGELACEQDWRHVLSHHLLAWVVITVVLVVISKSLKPRSYAP</sequence>
<comment type="function">
    <text>Negative regulator of the carotenoid synthesis regulon. It is probably inactivated by protoporphyrin IX in the presence of blue light. Inactivation of CarR leads to loss of negative control over the carotenogenesis protein CarQ.</text>
</comment>
<comment type="subcellular location">
    <subcellularLocation>
        <location>Cell inner membrane</location>
        <topology>Multi-pass membrane protein</topology>
    </subcellularLocation>
</comment>
<comment type="induction">
    <text>By light.</text>
</comment>
<reference key="1">
    <citation type="journal article" date="1993" name="Mol. Microbiol.">
        <title>Light-induced carotenogenesis in Myxococcus xanthus: DNA sequence analysis of the carR region.</title>
        <authorList>
            <person name="McGowan S.J."/>
            <person name="Gorham H.C."/>
            <person name="Hodgson D.A."/>
        </authorList>
    </citation>
    <scope>NUCLEOTIDE SEQUENCE [GENOMIC DNA]</scope>
    <source>
        <strain>DK101</strain>
    </source>
</reference>
<accession>Q06910</accession>
<keyword id="KW-0125">Carotenoid biosynthesis</keyword>
<keyword id="KW-0997">Cell inner membrane</keyword>
<keyword id="KW-1003">Cell membrane</keyword>
<keyword id="KW-0472">Membrane</keyword>
<keyword id="KW-0812">Transmembrane</keyword>
<keyword id="KW-1133">Transmembrane helix</keyword>
<protein>
    <recommendedName>
        <fullName>Carotenogenesis protein CarR</fullName>
    </recommendedName>
</protein>
<feature type="chain" id="PRO_0000089320" description="Carotenogenesis protein CarR">
    <location>
        <begin position="1"/>
        <end position="221"/>
    </location>
</feature>
<feature type="transmembrane region" description="Helical" evidence="1">
    <location>
        <begin position="56"/>
        <end position="76"/>
    </location>
</feature>
<feature type="transmembrane region" description="Helical" evidence="1">
    <location>
        <begin position="79"/>
        <end position="99"/>
    </location>
</feature>
<feature type="transmembrane region" description="Helical" evidence="1">
    <location>
        <begin position="107"/>
        <end position="127"/>
    </location>
</feature>
<feature type="transmembrane region" description="Helical" evidence="1">
    <location>
        <begin position="136"/>
        <end position="156"/>
    </location>
</feature>
<feature type="transmembrane region" description="Helical" evidence="1">
    <location>
        <begin position="166"/>
        <end position="186"/>
    </location>
</feature>
<feature type="transmembrane region" description="Helical" evidence="1">
    <location>
        <begin position="191"/>
        <end position="211"/>
    </location>
</feature>
<proteinExistence type="evidence at transcript level"/>
<organism>
    <name type="scientific">Myxococcus xanthus</name>
    <dbReference type="NCBI Taxonomy" id="34"/>
    <lineage>
        <taxon>Bacteria</taxon>
        <taxon>Pseudomonadati</taxon>
        <taxon>Myxococcota</taxon>
        <taxon>Myxococcia</taxon>
        <taxon>Myxococcales</taxon>
        <taxon>Cystobacterineae</taxon>
        <taxon>Myxococcaceae</taxon>
        <taxon>Myxococcus</taxon>
    </lineage>
</organism>
<name>CARR_MYXXA</name>
<dbReference type="EMBL" id="X71062">
    <property type="protein sequence ID" value="CAA50382.1"/>
    <property type="molecule type" value="Genomic_DNA"/>
</dbReference>
<dbReference type="PIR" id="S39878">
    <property type="entry name" value="S39878"/>
</dbReference>
<dbReference type="RefSeq" id="WP_011554096.1">
    <property type="nucleotide sequence ID" value="NZ_JABFNQ010000003.1"/>
</dbReference>
<dbReference type="OMA" id="WVCTVSH"/>
<dbReference type="GO" id="GO:0005886">
    <property type="term" value="C:plasma membrane"/>
    <property type="evidence" value="ECO:0007669"/>
    <property type="project" value="UniProtKB-SubCell"/>
</dbReference>
<dbReference type="GO" id="GO:0016117">
    <property type="term" value="P:carotenoid biosynthetic process"/>
    <property type="evidence" value="ECO:0007669"/>
    <property type="project" value="UniProtKB-KW"/>
</dbReference>
<evidence type="ECO:0000255" key="1"/>
<gene>
    <name type="primary">carR</name>
</gene>